<comment type="function">
    <text evidence="1">Required for the formation of a threonylcarbamoyl group on adenosine at position 37 (t(6)A37) in tRNAs that read codons beginning with adenine. Catalyzes the conversion of L-threonine, HCO(3)(-)/CO(2) and ATP to give threonylcarbamoyl-AMP (TC-AMP) as the acyladenylate intermediate, with the release of diphosphate.</text>
</comment>
<comment type="catalytic activity">
    <reaction evidence="1">
        <text>L-threonine + hydrogencarbonate + ATP = L-threonylcarbamoyladenylate + diphosphate + H2O</text>
        <dbReference type="Rhea" id="RHEA:36407"/>
        <dbReference type="ChEBI" id="CHEBI:15377"/>
        <dbReference type="ChEBI" id="CHEBI:17544"/>
        <dbReference type="ChEBI" id="CHEBI:30616"/>
        <dbReference type="ChEBI" id="CHEBI:33019"/>
        <dbReference type="ChEBI" id="CHEBI:57926"/>
        <dbReference type="ChEBI" id="CHEBI:73682"/>
        <dbReference type="EC" id="2.7.7.87"/>
    </reaction>
</comment>
<comment type="subcellular location">
    <subcellularLocation>
        <location evidence="1">Cytoplasm</location>
    </subcellularLocation>
</comment>
<comment type="similarity">
    <text evidence="1">Belongs to the SUA5 family. TsaC subfamily.</text>
</comment>
<evidence type="ECO:0000255" key="1">
    <source>
        <dbReference type="HAMAP-Rule" id="MF_01852"/>
    </source>
</evidence>
<name>TSAC_SHESM</name>
<organism>
    <name type="scientific">Shewanella sp. (strain MR-4)</name>
    <dbReference type="NCBI Taxonomy" id="60480"/>
    <lineage>
        <taxon>Bacteria</taxon>
        <taxon>Pseudomonadati</taxon>
        <taxon>Pseudomonadota</taxon>
        <taxon>Gammaproteobacteria</taxon>
        <taxon>Alteromonadales</taxon>
        <taxon>Shewanellaceae</taxon>
        <taxon>Shewanella</taxon>
    </lineage>
</organism>
<reference key="1">
    <citation type="submission" date="2006-08" db="EMBL/GenBank/DDBJ databases">
        <title>Complete sequence of Shewanella sp. MR-4.</title>
        <authorList>
            <consortium name="US DOE Joint Genome Institute"/>
            <person name="Copeland A."/>
            <person name="Lucas S."/>
            <person name="Lapidus A."/>
            <person name="Barry K."/>
            <person name="Detter J.C."/>
            <person name="Glavina del Rio T."/>
            <person name="Hammon N."/>
            <person name="Israni S."/>
            <person name="Dalin E."/>
            <person name="Tice H."/>
            <person name="Pitluck S."/>
            <person name="Kiss H."/>
            <person name="Brettin T."/>
            <person name="Bruce D."/>
            <person name="Han C."/>
            <person name="Tapia R."/>
            <person name="Gilna P."/>
            <person name="Schmutz J."/>
            <person name="Larimer F."/>
            <person name="Land M."/>
            <person name="Hauser L."/>
            <person name="Kyrpides N."/>
            <person name="Mikhailova N."/>
            <person name="Nealson K."/>
            <person name="Konstantinidis K."/>
            <person name="Klappenbach J."/>
            <person name="Tiedje J."/>
            <person name="Richardson P."/>
        </authorList>
    </citation>
    <scope>NUCLEOTIDE SEQUENCE [LARGE SCALE GENOMIC DNA]</scope>
    <source>
        <strain>MR-4</strain>
    </source>
</reference>
<accession>Q0HPA1</accession>
<gene>
    <name evidence="1" type="primary">tsaC</name>
    <name type="synonym">rimN</name>
    <name type="ordered locus">Shewmr4_0034</name>
</gene>
<proteinExistence type="inferred from homology"/>
<dbReference type="EC" id="2.7.7.87" evidence="1"/>
<dbReference type="EMBL" id="CP000446">
    <property type="protein sequence ID" value="ABI37116.1"/>
    <property type="molecule type" value="Genomic_DNA"/>
</dbReference>
<dbReference type="RefSeq" id="WP_011620870.1">
    <property type="nucleotide sequence ID" value="NC_008321.1"/>
</dbReference>
<dbReference type="SMR" id="Q0HPA1"/>
<dbReference type="KEGG" id="she:Shewmr4_0034"/>
<dbReference type="HOGENOM" id="CLU_031397_6_0_6"/>
<dbReference type="GO" id="GO:0005737">
    <property type="term" value="C:cytoplasm"/>
    <property type="evidence" value="ECO:0007669"/>
    <property type="project" value="UniProtKB-SubCell"/>
</dbReference>
<dbReference type="GO" id="GO:0005524">
    <property type="term" value="F:ATP binding"/>
    <property type="evidence" value="ECO:0007669"/>
    <property type="project" value="UniProtKB-UniRule"/>
</dbReference>
<dbReference type="GO" id="GO:0003725">
    <property type="term" value="F:double-stranded RNA binding"/>
    <property type="evidence" value="ECO:0007669"/>
    <property type="project" value="InterPro"/>
</dbReference>
<dbReference type="GO" id="GO:0061710">
    <property type="term" value="F:L-threonylcarbamoyladenylate synthase"/>
    <property type="evidence" value="ECO:0007669"/>
    <property type="project" value="UniProtKB-EC"/>
</dbReference>
<dbReference type="GO" id="GO:0000049">
    <property type="term" value="F:tRNA binding"/>
    <property type="evidence" value="ECO:0007669"/>
    <property type="project" value="TreeGrafter"/>
</dbReference>
<dbReference type="GO" id="GO:0006450">
    <property type="term" value="P:regulation of translational fidelity"/>
    <property type="evidence" value="ECO:0007669"/>
    <property type="project" value="TreeGrafter"/>
</dbReference>
<dbReference type="GO" id="GO:0002949">
    <property type="term" value="P:tRNA threonylcarbamoyladenosine modification"/>
    <property type="evidence" value="ECO:0007669"/>
    <property type="project" value="UniProtKB-UniRule"/>
</dbReference>
<dbReference type="FunFam" id="3.90.870.10:FF:000017">
    <property type="entry name" value="Threonylcarbamoyl-AMP synthase"/>
    <property type="match status" value="1"/>
</dbReference>
<dbReference type="Gene3D" id="3.90.870.10">
    <property type="entry name" value="DHBP synthase"/>
    <property type="match status" value="1"/>
</dbReference>
<dbReference type="HAMAP" id="MF_01852">
    <property type="entry name" value="TsaC"/>
    <property type="match status" value="1"/>
</dbReference>
<dbReference type="InterPro" id="IPR017945">
    <property type="entry name" value="DHBP_synth_RibB-like_a/b_dom"/>
</dbReference>
<dbReference type="InterPro" id="IPR006070">
    <property type="entry name" value="Sua5-like_dom"/>
</dbReference>
<dbReference type="InterPro" id="IPR023535">
    <property type="entry name" value="TC-AMP_synthase"/>
</dbReference>
<dbReference type="InterPro" id="IPR050156">
    <property type="entry name" value="TC-AMP_synthase_SUA5"/>
</dbReference>
<dbReference type="NCBIfam" id="TIGR00057">
    <property type="entry name" value="L-threonylcarbamoyladenylate synthase"/>
    <property type="match status" value="1"/>
</dbReference>
<dbReference type="PANTHER" id="PTHR17490">
    <property type="entry name" value="SUA5"/>
    <property type="match status" value="1"/>
</dbReference>
<dbReference type="PANTHER" id="PTHR17490:SF18">
    <property type="entry name" value="THREONYLCARBAMOYL-AMP SYNTHASE"/>
    <property type="match status" value="1"/>
</dbReference>
<dbReference type="Pfam" id="PF01300">
    <property type="entry name" value="Sua5_yciO_yrdC"/>
    <property type="match status" value="1"/>
</dbReference>
<dbReference type="SUPFAM" id="SSF55821">
    <property type="entry name" value="YrdC/RibB"/>
    <property type="match status" value="1"/>
</dbReference>
<dbReference type="PROSITE" id="PS51163">
    <property type="entry name" value="YRDC"/>
    <property type="match status" value="1"/>
</dbReference>
<sequence>MLQLHPSEIKDIVLNGGVIAYPTEAVYGLGCDPDNDTAIQKLLAVKQRPWQKGLILVASEFSQLVDYVDESQLSAEQLEFAFSKWPGPFTFVMPIKPHVSRYLCGEFDSIAVRVSAHEGVRALCQALGKPLVSTSANLAGEDPALSGDEILNAFEGKIDALVLGSLGEQRQPSTIIDARSGKILRNGQ</sequence>
<feature type="chain" id="PRO_0000352987" description="Threonylcarbamoyl-AMP synthase">
    <location>
        <begin position="1"/>
        <end position="188"/>
    </location>
</feature>
<feature type="domain" description="YrdC-like" evidence="1">
    <location>
        <begin position="3"/>
        <end position="188"/>
    </location>
</feature>
<protein>
    <recommendedName>
        <fullName evidence="1">Threonylcarbamoyl-AMP synthase</fullName>
        <shortName evidence="1">TC-AMP synthase</shortName>
        <ecNumber evidence="1">2.7.7.87</ecNumber>
    </recommendedName>
    <alternativeName>
        <fullName evidence="1">L-threonylcarbamoyladenylate synthase</fullName>
    </alternativeName>
    <alternativeName>
        <fullName evidence="1">t(6)A37 threonylcarbamoyladenosine biosynthesis protein TsaC</fullName>
    </alternativeName>
    <alternativeName>
        <fullName evidence="1">tRNA threonylcarbamoyladenosine biosynthesis protein TsaC</fullName>
    </alternativeName>
</protein>
<keyword id="KW-0067">ATP-binding</keyword>
<keyword id="KW-0963">Cytoplasm</keyword>
<keyword id="KW-0547">Nucleotide-binding</keyword>
<keyword id="KW-0548">Nucleotidyltransferase</keyword>
<keyword id="KW-0808">Transferase</keyword>
<keyword id="KW-0819">tRNA processing</keyword>